<gene>
    <name evidence="1" type="primary">gpsA</name>
    <name type="ordered locus">BCAH820_1599</name>
</gene>
<sequence length="340" mass="36593">MTKITVVGAGSWGTALAMVLADNGHDVRIWGNRSELMDEINTKHENSRYLPGITLPSTIVAYSSLEEALVDVNVVLLVVPTKAYREVLQDMKKYVAGPTTWIHASKGIEPGTSKRISEVIEEEIPEDLIKDVVVLSGPSHAEEVGLRQATTVTSAAKRMEAAEEVQDLFMNSYFRVYTNPDIVGVELGGALKNIIALAAGITDGLGLGDNAKAALMTRGLTEIARLGRKMGGNPLTFAGLTGMGDLIVTCTSVHSRNWRAGNMLGKGHSLEEVLESMGMVVEGVRTTKAAHELAEKMEVEMPITAALYDVLFNGNNVKDAVGSLMGRVRKHEVEAIPDLL</sequence>
<accession>B7JGZ0</accession>
<protein>
    <recommendedName>
        <fullName evidence="1">Glycerol-3-phosphate dehydrogenase [NAD(P)+]</fullName>
        <ecNumber evidence="1">1.1.1.94</ecNumber>
    </recommendedName>
    <alternativeName>
        <fullName evidence="1">NAD(P)(+)-dependent glycerol-3-phosphate dehydrogenase</fullName>
    </alternativeName>
    <alternativeName>
        <fullName evidence="1">NAD(P)H-dependent dihydroxyacetone-phosphate reductase</fullName>
    </alternativeName>
</protein>
<feature type="chain" id="PRO_1000123116" description="Glycerol-3-phosphate dehydrogenase [NAD(P)+]">
    <location>
        <begin position="1"/>
        <end position="340"/>
    </location>
</feature>
<feature type="active site" description="Proton acceptor" evidence="1">
    <location>
        <position position="192"/>
    </location>
</feature>
<feature type="binding site" evidence="1">
    <location>
        <position position="11"/>
    </location>
    <ligand>
        <name>NADPH</name>
        <dbReference type="ChEBI" id="CHEBI:57783"/>
    </ligand>
</feature>
<feature type="binding site" evidence="1">
    <location>
        <position position="12"/>
    </location>
    <ligand>
        <name>NADPH</name>
        <dbReference type="ChEBI" id="CHEBI:57783"/>
    </ligand>
</feature>
<feature type="binding site" evidence="1">
    <location>
        <position position="33"/>
    </location>
    <ligand>
        <name>NADPH</name>
        <dbReference type="ChEBI" id="CHEBI:57783"/>
    </ligand>
</feature>
<feature type="binding site" evidence="1">
    <location>
        <position position="106"/>
    </location>
    <ligand>
        <name>NADPH</name>
        <dbReference type="ChEBI" id="CHEBI:57783"/>
    </ligand>
</feature>
<feature type="binding site" evidence="1">
    <location>
        <position position="106"/>
    </location>
    <ligand>
        <name>sn-glycerol 3-phosphate</name>
        <dbReference type="ChEBI" id="CHEBI:57597"/>
    </ligand>
</feature>
<feature type="binding site" evidence="1">
    <location>
        <position position="137"/>
    </location>
    <ligand>
        <name>sn-glycerol 3-phosphate</name>
        <dbReference type="ChEBI" id="CHEBI:57597"/>
    </ligand>
</feature>
<feature type="binding site" evidence="1">
    <location>
        <position position="139"/>
    </location>
    <ligand>
        <name>sn-glycerol 3-phosphate</name>
        <dbReference type="ChEBI" id="CHEBI:57597"/>
    </ligand>
</feature>
<feature type="binding site" evidence="1">
    <location>
        <position position="141"/>
    </location>
    <ligand>
        <name>NADPH</name>
        <dbReference type="ChEBI" id="CHEBI:57783"/>
    </ligand>
</feature>
<feature type="binding site" evidence="1">
    <location>
        <position position="192"/>
    </location>
    <ligand>
        <name>sn-glycerol 3-phosphate</name>
        <dbReference type="ChEBI" id="CHEBI:57597"/>
    </ligand>
</feature>
<feature type="binding site" evidence="1">
    <location>
        <position position="245"/>
    </location>
    <ligand>
        <name>sn-glycerol 3-phosphate</name>
        <dbReference type="ChEBI" id="CHEBI:57597"/>
    </ligand>
</feature>
<feature type="binding site" evidence="1">
    <location>
        <position position="255"/>
    </location>
    <ligand>
        <name>sn-glycerol 3-phosphate</name>
        <dbReference type="ChEBI" id="CHEBI:57597"/>
    </ligand>
</feature>
<feature type="binding site" evidence="1">
    <location>
        <position position="256"/>
    </location>
    <ligand>
        <name>NADPH</name>
        <dbReference type="ChEBI" id="CHEBI:57783"/>
    </ligand>
</feature>
<feature type="binding site" evidence="1">
    <location>
        <position position="256"/>
    </location>
    <ligand>
        <name>sn-glycerol 3-phosphate</name>
        <dbReference type="ChEBI" id="CHEBI:57597"/>
    </ligand>
</feature>
<feature type="binding site" evidence="1">
    <location>
        <position position="257"/>
    </location>
    <ligand>
        <name>sn-glycerol 3-phosphate</name>
        <dbReference type="ChEBI" id="CHEBI:57597"/>
    </ligand>
</feature>
<feature type="binding site" evidence="1">
    <location>
        <position position="280"/>
    </location>
    <ligand>
        <name>NADPH</name>
        <dbReference type="ChEBI" id="CHEBI:57783"/>
    </ligand>
</feature>
<feature type="binding site" evidence="1">
    <location>
        <position position="282"/>
    </location>
    <ligand>
        <name>NADPH</name>
        <dbReference type="ChEBI" id="CHEBI:57783"/>
    </ligand>
</feature>
<proteinExistence type="inferred from homology"/>
<keyword id="KW-0963">Cytoplasm</keyword>
<keyword id="KW-0444">Lipid biosynthesis</keyword>
<keyword id="KW-0443">Lipid metabolism</keyword>
<keyword id="KW-0520">NAD</keyword>
<keyword id="KW-0521">NADP</keyword>
<keyword id="KW-0547">Nucleotide-binding</keyword>
<keyword id="KW-0560">Oxidoreductase</keyword>
<keyword id="KW-0594">Phospholipid biosynthesis</keyword>
<keyword id="KW-1208">Phospholipid metabolism</keyword>
<evidence type="ECO:0000255" key="1">
    <source>
        <dbReference type="HAMAP-Rule" id="MF_00394"/>
    </source>
</evidence>
<comment type="function">
    <text evidence="1">Catalyzes the reduction of the glycolytic intermediate dihydroxyacetone phosphate (DHAP) to sn-glycerol 3-phosphate (G3P), the key precursor for phospholipid synthesis.</text>
</comment>
<comment type="catalytic activity">
    <reaction evidence="1">
        <text>sn-glycerol 3-phosphate + NAD(+) = dihydroxyacetone phosphate + NADH + H(+)</text>
        <dbReference type="Rhea" id="RHEA:11092"/>
        <dbReference type="ChEBI" id="CHEBI:15378"/>
        <dbReference type="ChEBI" id="CHEBI:57540"/>
        <dbReference type="ChEBI" id="CHEBI:57597"/>
        <dbReference type="ChEBI" id="CHEBI:57642"/>
        <dbReference type="ChEBI" id="CHEBI:57945"/>
        <dbReference type="EC" id="1.1.1.94"/>
    </reaction>
    <physiologicalReaction direction="right-to-left" evidence="1">
        <dbReference type="Rhea" id="RHEA:11094"/>
    </physiologicalReaction>
</comment>
<comment type="catalytic activity">
    <reaction evidence="1">
        <text>sn-glycerol 3-phosphate + NADP(+) = dihydroxyacetone phosphate + NADPH + H(+)</text>
        <dbReference type="Rhea" id="RHEA:11096"/>
        <dbReference type="ChEBI" id="CHEBI:15378"/>
        <dbReference type="ChEBI" id="CHEBI:57597"/>
        <dbReference type="ChEBI" id="CHEBI:57642"/>
        <dbReference type="ChEBI" id="CHEBI:57783"/>
        <dbReference type="ChEBI" id="CHEBI:58349"/>
        <dbReference type="EC" id="1.1.1.94"/>
    </reaction>
    <physiologicalReaction direction="right-to-left" evidence="1">
        <dbReference type="Rhea" id="RHEA:11098"/>
    </physiologicalReaction>
</comment>
<comment type="pathway">
    <text evidence="1">Membrane lipid metabolism; glycerophospholipid metabolism.</text>
</comment>
<comment type="subcellular location">
    <subcellularLocation>
        <location evidence="1">Cytoplasm</location>
    </subcellularLocation>
</comment>
<comment type="similarity">
    <text evidence="1">Belongs to the NAD-dependent glycerol-3-phosphate dehydrogenase family.</text>
</comment>
<reference key="1">
    <citation type="submission" date="2008-10" db="EMBL/GenBank/DDBJ databases">
        <title>Genome sequence of Bacillus cereus AH820.</title>
        <authorList>
            <person name="Dodson R.J."/>
            <person name="Durkin A.S."/>
            <person name="Rosovitz M.J."/>
            <person name="Rasko D.A."/>
            <person name="Hoffmaster A."/>
            <person name="Ravel J."/>
            <person name="Sutton G."/>
        </authorList>
    </citation>
    <scope>NUCLEOTIDE SEQUENCE [LARGE SCALE GENOMIC DNA]</scope>
    <source>
        <strain>AH820</strain>
    </source>
</reference>
<name>GPDA_BACC0</name>
<dbReference type="EC" id="1.1.1.94" evidence="1"/>
<dbReference type="EMBL" id="CP001283">
    <property type="protein sequence ID" value="ACK87489.1"/>
    <property type="molecule type" value="Genomic_DNA"/>
</dbReference>
<dbReference type="RefSeq" id="WP_000161776.1">
    <property type="nucleotide sequence ID" value="NC_011773.1"/>
</dbReference>
<dbReference type="SMR" id="B7JGZ0"/>
<dbReference type="KEGG" id="bcu:BCAH820_1599"/>
<dbReference type="HOGENOM" id="CLU_033449_0_2_9"/>
<dbReference type="UniPathway" id="UPA00940"/>
<dbReference type="Proteomes" id="UP000001363">
    <property type="component" value="Chromosome"/>
</dbReference>
<dbReference type="GO" id="GO:0005829">
    <property type="term" value="C:cytosol"/>
    <property type="evidence" value="ECO:0007669"/>
    <property type="project" value="TreeGrafter"/>
</dbReference>
<dbReference type="GO" id="GO:0047952">
    <property type="term" value="F:glycerol-3-phosphate dehydrogenase [NAD(P)+] activity"/>
    <property type="evidence" value="ECO:0007669"/>
    <property type="project" value="UniProtKB-UniRule"/>
</dbReference>
<dbReference type="GO" id="GO:0051287">
    <property type="term" value="F:NAD binding"/>
    <property type="evidence" value="ECO:0007669"/>
    <property type="project" value="InterPro"/>
</dbReference>
<dbReference type="GO" id="GO:0005975">
    <property type="term" value="P:carbohydrate metabolic process"/>
    <property type="evidence" value="ECO:0007669"/>
    <property type="project" value="InterPro"/>
</dbReference>
<dbReference type="GO" id="GO:0046167">
    <property type="term" value="P:glycerol-3-phosphate biosynthetic process"/>
    <property type="evidence" value="ECO:0007669"/>
    <property type="project" value="UniProtKB-UniRule"/>
</dbReference>
<dbReference type="GO" id="GO:0046168">
    <property type="term" value="P:glycerol-3-phosphate catabolic process"/>
    <property type="evidence" value="ECO:0007669"/>
    <property type="project" value="InterPro"/>
</dbReference>
<dbReference type="GO" id="GO:0006650">
    <property type="term" value="P:glycerophospholipid metabolic process"/>
    <property type="evidence" value="ECO:0007669"/>
    <property type="project" value="UniProtKB-UniRule"/>
</dbReference>
<dbReference type="GO" id="GO:0008654">
    <property type="term" value="P:phospholipid biosynthetic process"/>
    <property type="evidence" value="ECO:0007669"/>
    <property type="project" value="UniProtKB-KW"/>
</dbReference>
<dbReference type="FunFam" id="1.10.1040.10:FF:000001">
    <property type="entry name" value="Glycerol-3-phosphate dehydrogenase [NAD(P)+]"/>
    <property type="match status" value="1"/>
</dbReference>
<dbReference type="FunFam" id="3.40.50.720:FF:000019">
    <property type="entry name" value="Glycerol-3-phosphate dehydrogenase [NAD(P)+]"/>
    <property type="match status" value="1"/>
</dbReference>
<dbReference type="Gene3D" id="1.10.1040.10">
    <property type="entry name" value="N-(1-d-carboxylethyl)-l-norvaline Dehydrogenase, domain 2"/>
    <property type="match status" value="1"/>
</dbReference>
<dbReference type="Gene3D" id="3.40.50.720">
    <property type="entry name" value="NAD(P)-binding Rossmann-like Domain"/>
    <property type="match status" value="1"/>
</dbReference>
<dbReference type="HAMAP" id="MF_00394">
    <property type="entry name" value="NAD_Glyc3P_dehydrog"/>
    <property type="match status" value="1"/>
</dbReference>
<dbReference type="InterPro" id="IPR008927">
    <property type="entry name" value="6-PGluconate_DH-like_C_sf"/>
</dbReference>
<dbReference type="InterPro" id="IPR013328">
    <property type="entry name" value="6PGD_dom2"/>
</dbReference>
<dbReference type="InterPro" id="IPR006168">
    <property type="entry name" value="G3P_DH_NAD-dep"/>
</dbReference>
<dbReference type="InterPro" id="IPR006109">
    <property type="entry name" value="G3P_DH_NAD-dep_C"/>
</dbReference>
<dbReference type="InterPro" id="IPR011128">
    <property type="entry name" value="G3P_DH_NAD-dep_N"/>
</dbReference>
<dbReference type="InterPro" id="IPR036291">
    <property type="entry name" value="NAD(P)-bd_dom_sf"/>
</dbReference>
<dbReference type="NCBIfam" id="NF000940">
    <property type="entry name" value="PRK00094.1-2"/>
    <property type="match status" value="1"/>
</dbReference>
<dbReference type="NCBIfam" id="NF000941">
    <property type="entry name" value="PRK00094.1-3"/>
    <property type="match status" value="1"/>
</dbReference>
<dbReference type="NCBIfam" id="NF000942">
    <property type="entry name" value="PRK00094.1-4"/>
    <property type="match status" value="1"/>
</dbReference>
<dbReference type="PANTHER" id="PTHR11728">
    <property type="entry name" value="GLYCEROL-3-PHOSPHATE DEHYDROGENASE"/>
    <property type="match status" value="1"/>
</dbReference>
<dbReference type="PANTHER" id="PTHR11728:SF1">
    <property type="entry name" value="GLYCEROL-3-PHOSPHATE DEHYDROGENASE [NAD(+)] 2, CHLOROPLASTIC"/>
    <property type="match status" value="1"/>
</dbReference>
<dbReference type="Pfam" id="PF07479">
    <property type="entry name" value="NAD_Gly3P_dh_C"/>
    <property type="match status" value="1"/>
</dbReference>
<dbReference type="Pfam" id="PF01210">
    <property type="entry name" value="NAD_Gly3P_dh_N"/>
    <property type="match status" value="1"/>
</dbReference>
<dbReference type="PIRSF" id="PIRSF000114">
    <property type="entry name" value="Glycerol-3-P_dh"/>
    <property type="match status" value="1"/>
</dbReference>
<dbReference type="PRINTS" id="PR00077">
    <property type="entry name" value="GPDHDRGNASE"/>
</dbReference>
<dbReference type="SUPFAM" id="SSF48179">
    <property type="entry name" value="6-phosphogluconate dehydrogenase C-terminal domain-like"/>
    <property type="match status" value="1"/>
</dbReference>
<dbReference type="SUPFAM" id="SSF51735">
    <property type="entry name" value="NAD(P)-binding Rossmann-fold domains"/>
    <property type="match status" value="1"/>
</dbReference>
<dbReference type="PROSITE" id="PS00957">
    <property type="entry name" value="NAD_G3PDH"/>
    <property type="match status" value="1"/>
</dbReference>
<organism>
    <name type="scientific">Bacillus cereus (strain AH820)</name>
    <dbReference type="NCBI Taxonomy" id="405535"/>
    <lineage>
        <taxon>Bacteria</taxon>
        <taxon>Bacillati</taxon>
        <taxon>Bacillota</taxon>
        <taxon>Bacilli</taxon>
        <taxon>Bacillales</taxon>
        <taxon>Bacillaceae</taxon>
        <taxon>Bacillus</taxon>
        <taxon>Bacillus cereus group</taxon>
    </lineage>
</organism>